<proteinExistence type="inferred from homology"/>
<evidence type="ECO:0000255" key="1">
    <source>
        <dbReference type="HAMAP-Rule" id="MF_00048"/>
    </source>
</evidence>
<accession>A8M6A9</accession>
<organism>
    <name type="scientific">Salinispora arenicola (strain CNS-205)</name>
    <dbReference type="NCBI Taxonomy" id="391037"/>
    <lineage>
        <taxon>Bacteria</taxon>
        <taxon>Bacillati</taxon>
        <taxon>Actinomycetota</taxon>
        <taxon>Actinomycetes</taxon>
        <taxon>Micromonosporales</taxon>
        <taxon>Micromonosporaceae</taxon>
        <taxon>Salinispora</taxon>
    </lineage>
</organism>
<comment type="similarity">
    <text evidence="1">Belongs to the UPF0102 family.</text>
</comment>
<dbReference type="EMBL" id="CP000850">
    <property type="protein sequence ID" value="ABV97134.1"/>
    <property type="molecule type" value="Genomic_DNA"/>
</dbReference>
<dbReference type="SMR" id="A8M6A9"/>
<dbReference type="STRING" id="391037.Sare_1228"/>
<dbReference type="KEGG" id="saq:Sare_1228"/>
<dbReference type="PATRIC" id="fig|391037.6.peg.1244"/>
<dbReference type="eggNOG" id="COG0792">
    <property type="taxonomic scope" value="Bacteria"/>
</dbReference>
<dbReference type="HOGENOM" id="CLU_115353_2_3_11"/>
<dbReference type="OrthoDB" id="9794876at2"/>
<dbReference type="GO" id="GO:0003676">
    <property type="term" value="F:nucleic acid binding"/>
    <property type="evidence" value="ECO:0007669"/>
    <property type="project" value="InterPro"/>
</dbReference>
<dbReference type="CDD" id="cd20736">
    <property type="entry name" value="PoNe_Nuclease"/>
    <property type="match status" value="1"/>
</dbReference>
<dbReference type="Gene3D" id="3.40.1350.10">
    <property type="match status" value="1"/>
</dbReference>
<dbReference type="HAMAP" id="MF_00048">
    <property type="entry name" value="UPF0102"/>
    <property type="match status" value="1"/>
</dbReference>
<dbReference type="InterPro" id="IPR011335">
    <property type="entry name" value="Restrct_endonuc-II-like"/>
</dbReference>
<dbReference type="InterPro" id="IPR011856">
    <property type="entry name" value="tRNA_endonuc-like_dom_sf"/>
</dbReference>
<dbReference type="InterPro" id="IPR003509">
    <property type="entry name" value="UPF0102_YraN-like"/>
</dbReference>
<dbReference type="NCBIfam" id="NF009150">
    <property type="entry name" value="PRK12497.1-3"/>
    <property type="match status" value="1"/>
</dbReference>
<dbReference type="NCBIfam" id="NF009154">
    <property type="entry name" value="PRK12497.3-3"/>
    <property type="match status" value="1"/>
</dbReference>
<dbReference type="PANTHER" id="PTHR34039">
    <property type="entry name" value="UPF0102 PROTEIN YRAN"/>
    <property type="match status" value="1"/>
</dbReference>
<dbReference type="PANTHER" id="PTHR34039:SF1">
    <property type="entry name" value="UPF0102 PROTEIN YRAN"/>
    <property type="match status" value="1"/>
</dbReference>
<dbReference type="Pfam" id="PF02021">
    <property type="entry name" value="UPF0102"/>
    <property type="match status" value="1"/>
</dbReference>
<dbReference type="SUPFAM" id="SSF52980">
    <property type="entry name" value="Restriction endonuclease-like"/>
    <property type="match status" value="1"/>
</dbReference>
<sequence length="119" mass="13072">MSRRNQAVGAYGERCALQHLITAGMRPVERNWRCPHGEIDIIAWDGPVLAICEVKTRRTDTFGAPAAAVTGPKARRLRVLAAQWLAETGTRADEVRFDVLSVRVTAAGPPRIEHLKGAF</sequence>
<reference key="1">
    <citation type="submission" date="2007-10" db="EMBL/GenBank/DDBJ databases">
        <title>Complete sequence of Salinispora arenicola CNS-205.</title>
        <authorList>
            <consortium name="US DOE Joint Genome Institute"/>
            <person name="Copeland A."/>
            <person name="Lucas S."/>
            <person name="Lapidus A."/>
            <person name="Barry K."/>
            <person name="Glavina del Rio T."/>
            <person name="Dalin E."/>
            <person name="Tice H."/>
            <person name="Pitluck S."/>
            <person name="Foster B."/>
            <person name="Schmutz J."/>
            <person name="Larimer F."/>
            <person name="Land M."/>
            <person name="Hauser L."/>
            <person name="Kyrpides N."/>
            <person name="Ivanova N."/>
            <person name="Jensen P.R."/>
            <person name="Moore B.S."/>
            <person name="Penn K."/>
            <person name="Jenkins C."/>
            <person name="Udwary D."/>
            <person name="Xiang L."/>
            <person name="Gontang E."/>
            <person name="Richardson P."/>
        </authorList>
    </citation>
    <scope>NUCLEOTIDE SEQUENCE [LARGE SCALE GENOMIC DNA]</scope>
    <source>
        <strain>CNS-205</strain>
    </source>
</reference>
<gene>
    <name type="ordered locus">Sare_1228</name>
</gene>
<feature type="chain" id="PRO_0000336256" description="UPF0102 protein Sare_1228">
    <location>
        <begin position="1"/>
        <end position="119"/>
    </location>
</feature>
<protein>
    <recommendedName>
        <fullName evidence="1">UPF0102 protein Sare_1228</fullName>
    </recommendedName>
</protein>
<name>Y1228_SALAI</name>